<organism>
    <name type="scientific">Arabidopsis thaliana</name>
    <name type="common">Mouse-ear cress</name>
    <dbReference type="NCBI Taxonomy" id="3702"/>
    <lineage>
        <taxon>Eukaryota</taxon>
        <taxon>Viridiplantae</taxon>
        <taxon>Streptophyta</taxon>
        <taxon>Embryophyta</taxon>
        <taxon>Tracheophyta</taxon>
        <taxon>Spermatophyta</taxon>
        <taxon>Magnoliopsida</taxon>
        <taxon>eudicotyledons</taxon>
        <taxon>Gunneridae</taxon>
        <taxon>Pentapetalae</taxon>
        <taxon>rosids</taxon>
        <taxon>malvids</taxon>
        <taxon>Brassicales</taxon>
        <taxon>Brassicaceae</taxon>
        <taxon>Camelineae</taxon>
        <taxon>Arabidopsis</taxon>
    </lineage>
</organism>
<evidence type="ECO:0000255" key="1">
    <source>
        <dbReference type="PROSITE-ProRule" id="PRU00541"/>
    </source>
</evidence>
<evidence type="ECO:0000255" key="2">
    <source>
        <dbReference type="PROSITE-ProRule" id="PRU00542"/>
    </source>
</evidence>
<evidence type="ECO:0000256" key="3">
    <source>
        <dbReference type="SAM" id="MobiDB-lite"/>
    </source>
</evidence>
<evidence type="ECO:0000269" key="4">
    <source>
    </source>
</evidence>
<evidence type="ECO:0000305" key="5"/>
<protein>
    <recommendedName>
        <fullName>DEAD-box ATP-dependent RNA helicase 56</fullName>
        <ecNumber>3.6.4.13</ecNumber>
    </recommendedName>
    <alternativeName>
        <fullName>UAP56 homolog B</fullName>
    </alternativeName>
</protein>
<accession>Q9LFN6</accession>
<accession>Q93VJ8</accession>
<sequence length="427" mass="48337">MGDARDNEAYEEELLDYEEEDEKVPDSGNKVNGEAVKKGYVGIHSSGFRDFLLKPELLRAIVDSGFEHPSEVQHECIPQAILGMDVICQAKSGMGKTAVFVLSTLQQIEPSPGQVSALVLCHTRELAYQICNEFVRFSTYLPDTKVSVFYGGVNIKIHKDLLKNECPHIVVGTPGRVLALAREKDLSLKNVRHFILDECDKMLESLDMRRDVQEIFKMTPHDKQVMMFSATLSKEIRPVCKKFMQDPMEIYVDDEAKLTLHGLVQHYIKLSEMEKNRKLNDLLDALDFNQVVIFVKSVSRAAELNKLLVECNFPSICIHSGMSQEERLTRYKSFKEGHKRILVATDLVGRGIDIERVNIVINYDMPDSADTYLHRVGRAGRFGTKGLAITFVASASDSEVLNQVQERFEVDIKELPEQIDTSTYMPS</sequence>
<reference key="1">
    <citation type="journal article" date="2000" name="Nature">
        <title>Sequence and analysis of chromosome 5 of the plant Arabidopsis thaliana.</title>
        <authorList>
            <person name="Tabata S."/>
            <person name="Kaneko T."/>
            <person name="Nakamura Y."/>
            <person name="Kotani H."/>
            <person name="Kato T."/>
            <person name="Asamizu E."/>
            <person name="Miyajima N."/>
            <person name="Sasamoto S."/>
            <person name="Kimura T."/>
            <person name="Hosouchi T."/>
            <person name="Kawashima K."/>
            <person name="Kohara M."/>
            <person name="Matsumoto M."/>
            <person name="Matsuno A."/>
            <person name="Muraki A."/>
            <person name="Nakayama S."/>
            <person name="Nakazaki N."/>
            <person name="Naruo K."/>
            <person name="Okumura S."/>
            <person name="Shinpo S."/>
            <person name="Takeuchi C."/>
            <person name="Wada T."/>
            <person name="Watanabe A."/>
            <person name="Yamada M."/>
            <person name="Yasuda M."/>
            <person name="Sato S."/>
            <person name="de la Bastide M."/>
            <person name="Huang E."/>
            <person name="Spiegel L."/>
            <person name="Gnoj L."/>
            <person name="O'Shaughnessy A."/>
            <person name="Preston R."/>
            <person name="Habermann K."/>
            <person name="Murray J."/>
            <person name="Johnson D."/>
            <person name="Rohlfing T."/>
            <person name="Nelson J."/>
            <person name="Stoneking T."/>
            <person name="Pepin K."/>
            <person name="Spieth J."/>
            <person name="Sekhon M."/>
            <person name="Armstrong J."/>
            <person name="Becker M."/>
            <person name="Belter E."/>
            <person name="Cordum H."/>
            <person name="Cordes M."/>
            <person name="Courtney L."/>
            <person name="Courtney W."/>
            <person name="Dante M."/>
            <person name="Du H."/>
            <person name="Edwards J."/>
            <person name="Fryman J."/>
            <person name="Haakensen B."/>
            <person name="Lamar E."/>
            <person name="Latreille P."/>
            <person name="Leonard S."/>
            <person name="Meyer R."/>
            <person name="Mulvaney E."/>
            <person name="Ozersky P."/>
            <person name="Riley A."/>
            <person name="Strowmatt C."/>
            <person name="Wagner-McPherson C."/>
            <person name="Wollam A."/>
            <person name="Yoakum M."/>
            <person name="Bell M."/>
            <person name="Dedhia N."/>
            <person name="Parnell L."/>
            <person name="Shah R."/>
            <person name="Rodriguez M."/>
            <person name="Hoon See L."/>
            <person name="Vil D."/>
            <person name="Baker J."/>
            <person name="Kirchoff K."/>
            <person name="Toth K."/>
            <person name="King L."/>
            <person name="Bahret A."/>
            <person name="Miller B."/>
            <person name="Marra M.A."/>
            <person name="Martienssen R."/>
            <person name="McCombie W.R."/>
            <person name="Wilson R.K."/>
            <person name="Murphy G."/>
            <person name="Bancroft I."/>
            <person name="Volckaert G."/>
            <person name="Wambutt R."/>
            <person name="Duesterhoeft A."/>
            <person name="Stiekema W."/>
            <person name="Pohl T."/>
            <person name="Entian K.-D."/>
            <person name="Terryn N."/>
            <person name="Hartley N."/>
            <person name="Bent E."/>
            <person name="Johnson S."/>
            <person name="Langham S.-A."/>
            <person name="McCullagh B."/>
            <person name="Robben J."/>
            <person name="Grymonprez B."/>
            <person name="Zimmermann W."/>
            <person name="Ramsperger U."/>
            <person name="Wedler H."/>
            <person name="Balke K."/>
            <person name="Wedler E."/>
            <person name="Peters S."/>
            <person name="van Staveren M."/>
            <person name="Dirkse W."/>
            <person name="Mooijman P."/>
            <person name="Klein Lankhorst R."/>
            <person name="Weitzenegger T."/>
            <person name="Bothe G."/>
            <person name="Rose M."/>
            <person name="Hauf J."/>
            <person name="Berneiser S."/>
            <person name="Hempel S."/>
            <person name="Feldpausch M."/>
            <person name="Lamberth S."/>
            <person name="Villarroel R."/>
            <person name="Gielen J."/>
            <person name="Ardiles W."/>
            <person name="Bents O."/>
            <person name="Lemcke K."/>
            <person name="Kolesov G."/>
            <person name="Mayer K.F.X."/>
            <person name="Rudd S."/>
            <person name="Schoof H."/>
            <person name="Schueller C."/>
            <person name="Zaccaria P."/>
            <person name="Mewes H.-W."/>
            <person name="Bevan M."/>
            <person name="Fransz P.F."/>
        </authorList>
    </citation>
    <scope>NUCLEOTIDE SEQUENCE [LARGE SCALE GENOMIC DNA]</scope>
    <source>
        <strain>cv. Columbia</strain>
    </source>
</reference>
<reference key="2">
    <citation type="journal article" date="2017" name="Plant J.">
        <title>Araport11: a complete reannotation of the Arabidopsis thaliana reference genome.</title>
        <authorList>
            <person name="Cheng C.Y."/>
            <person name="Krishnakumar V."/>
            <person name="Chan A.P."/>
            <person name="Thibaud-Nissen F."/>
            <person name="Schobel S."/>
            <person name="Town C.D."/>
        </authorList>
    </citation>
    <scope>GENOME REANNOTATION</scope>
    <source>
        <strain>cv. Columbia</strain>
    </source>
</reference>
<reference key="3">
    <citation type="journal article" date="2003" name="Science">
        <title>Empirical analysis of transcriptional activity in the Arabidopsis genome.</title>
        <authorList>
            <person name="Yamada K."/>
            <person name="Lim J."/>
            <person name="Dale J.M."/>
            <person name="Chen H."/>
            <person name="Shinn P."/>
            <person name="Palm C.J."/>
            <person name="Southwick A.M."/>
            <person name="Wu H.C."/>
            <person name="Kim C.J."/>
            <person name="Nguyen M."/>
            <person name="Pham P.K."/>
            <person name="Cheuk R.F."/>
            <person name="Karlin-Newmann G."/>
            <person name="Liu S.X."/>
            <person name="Lam B."/>
            <person name="Sakano H."/>
            <person name="Wu T."/>
            <person name="Yu G."/>
            <person name="Miranda M."/>
            <person name="Quach H.L."/>
            <person name="Tripp M."/>
            <person name="Chang C.H."/>
            <person name="Lee J.M."/>
            <person name="Toriumi M.J."/>
            <person name="Chan M.M."/>
            <person name="Tang C.C."/>
            <person name="Onodera C.S."/>
            <person name="Deng J.M."/>
            <person name="Akiyama K."/>
            <person name="Ansari Y."/>
            <person name="Arakawa T."/>
            <person name="Banh J."/>
            <person name="Banno F."/>
            <person name="Bowser L."/>
            <person name="Brooks S.Y."/>
            <person name="Carninci P."/>
            <person name="Chao Q."/>
            <person name="Choy N."/>
            <person name="Enju A."/>
            <person name="Goldsmith A.D."/>
            <person name="Gurjal M."/>
            <person name="Hansen N.F."/>
            <person name="Hayashizaki Y."/>
            <person name="Johnson-Hopson C."/>
            <person name="Hsuan V.W."/>
            <person name="Iida K."/>
            <person name="Karnes M."/>
            <person name="Khan S."/>
            <person name="Koesema E."/>
            <person name="Ishida J."/>
            <person name="Jiang P.X."/>
            <person name="Jones T."/>
            <person name="Kawai J."/>
            <person name="Kamiya A."/>
            <person name="Meyers C."/>
            <person name="Nakajima M."/>
            <person name="Narusaka M."/>
            <person name="Seki M."/>
            <person name="Sakurai T."/>
            <person name="Satou M."/>
            <person name="Tamse R."/>
            <person name="Vaysberg M."/>
            <person name="Wallender E.K."/>
            <person name="Wong C."/>
            <person name="Yamamura Y."/>
            <person name="Yuan S."/>
            <person name="Shinozaki K."/>
            <person name="Davis R.W."/>
            <person name="Theologis A."/>
            <person name="Ecker J.R."/>
        </authorList>
    </citation>
    <scope>NUCLEOTIDE SEQUENCE [LARGE SCALE MRNA]</scope>
    <source>
        <strain>cv. Columbia</strain>
    </source>
</reference>
<reference key="4">
    <citation type="journal article" date="2004" name="Plant Biotechnol. J.">
        <title>DEAD-box RNA helicases in Arabidopsis thaliana: establishing a link between quantitative expression, gene structure and evolution of a family of genes.</title>
        <authorList>
            <person name="Mingam A."/>
            <person name="Toffano-Nioche C."/>
            <person name="Brunaud V."/>
            <person name="Boudet N."/>
            <person name="Kreis M."/>
            <person name="Lecharny A."/>
        </authorList>
    </citation>
    <scope>GENE FAMILY</scope>
    <scope>NOMENCLATURE</scope>
</reference>
<reference key="5">
    <citation type="journal article" date="2013" name="PLoS ONE">
        <title>Genome-wide comparative in silico analysis of the RNA helicase gene family in Zea mays and Glycine max: a comparison with Arabidopsis and Oryza sativa.</title>
        <authorList>
            <person name="Xu R."/>
            <person name="Zhang S."/>
            <person name="Huang J."/>
            <person name="Zheng C."/>
        </authorList>
    </citation>
    <scope>GENE FAMILY</scope>
</reference>
<reference key="6">
    <citation type="journal article" date="2013" name="PLoS ONE">
        <title>Arabidopsis DEAD-box RNA helicase UAP56 interacts with both RNA and DNA as well as with mRNA export factors.</title>
        <authorList>
            <person name="Kammel C."/>
            <person name="Thomaier M."/>
            <person name="Sorensen B.B."/>
            <person name="Schubert T."/>
            <person name="Langst G."/>
            <person name="Grasser M."/>
            <person name="Grasser K.D."/>
        </authorList>
    </citation>
    <scope>FUNCTION</scope>
    <scope>SUBCELLULAR LOCATION</scope>
    <scope>INTERACTION WITH ALY2 AND MOS11</scope>
</reference>
<keyword id="KW-0025">Alternative splicing</keyword>
<keyword id="KW-0067">ATP-binding</keyword>
<keyword id="KW-0347">Helicase</keyword>
<keyword id="KW-0378">Hydrolase</keyword>
<keyword id="KW-0507">mRNA processing</keyword>
<keyword id="KW-0508">mRNA splicing</keyword>
<keyword id="KW-0509">mRNA transport</keyword>
<keyword id="KW-0547">Nucleotide-binding</keyword>
<keyword id="KW-0539">Nucleus</keyword>
<keyword id="KW-1185">Reference proteome</keyword>
<keyword id="KW-0694">RNA-binding</keyword>
<keyword id="KW-0813">Transport</keyword>
<gene>
    <name type="primary">RH56</name>
    <name type="synonym">UAP56B</name>
    <name type="ordered locus">At5g11200</name>
    <name type="ORF">F2I11.90</name>
</gene>
<comment type="function">
    <text evidence="4">ATP-dependent RNA helicase involved in pre-mRNA splicing. Required for the export of mRNA out of the nucleus. In addition to ssRNA and dsRNA, binds dsDNA, but not ssDNA.</text>
</comment>
<comment type="catalytic activity">
    <reaction>
        <text>ATP + H2O = ADP + phosphate + H(+)</text>
        <dbReference type="Rhea" id="RHEA:13065"/>
        <dbReference type="ChEBI" id="CHEBI:15377"/>
        <dbReference type="ChEBI" id="CHEBI:15378"/>
        <dbReference type="ChEBI" id="CHEBI:30616"/>
        <dbReference type="ChEBI" id="CHEBI:43474"/>
        <dbReference type="ChEBI" id="CHEBI:456216"/>
        <dbReference type="EC" id="3.6.4.13"/>
    </reaction>
</comment>
<comment type="subunit">
    <text evidence="4">Interacts with ALY2 and MOS11.</text>
</comment>
<comment type="subcellular location">
    <subcellularLocation>
        <location evidence="4">Nucleus</location>
    </subcellularLocation>
    <text>Localizes predominantly to euchromatic regions of the nucleoplasm.</text>
</comment>
<comment type="alternative products">
    <event type="alternative splicing"/>
    <isoform>
        <id>Q9LFN6-1</id>
        <name>1</name>
        <sequence type="displayed"/>
    </isoform>
    <text>A number of isoforms are produced. According to EST sequences.</text>
</comment>
<comment type="domain">
    <text>The Q motif is unique to and characteristic of the DEAD box family of RNA helicases and controls ATP binding and hydrolysis.</text>
</comment>
<comment type="similarity">
    <text evidence="5">Belongs to the DEAD box helicase family. DECD subfamily.</text>
</comment>
<comment type="sequence caution" evidence="5">
    <conflict type="erroneous gene model prediction">
        <sequence resource="EMBL-CDS" id="CAB96655"/>
    </conflict>
</comment>
<proteinExistence type="evidence at protein level"/>
<feature type="chain" id="PRO_0000239195" description="DEAD-box ATP-dependent RNA helicase 56">
    <location>
        <begin position="1"/>
        <end position="427"/>
    </location>
</feature>
<feature type="domain" description="Helicase ATP-binding" evidence="1">
    <location>
        <begin position="77"/>
        <end position="250"/>
    </location>
</feature>
<feature type="domain" description="Helicase C-terminal" evidence="2">
    <location>
        <begin position="278"/>
        <end position="423"/>
    </location>
</feature>
<feature type="region of interest" description="Disordered" evidence="3">
    <location>
        <begin position="1"/>
        <end position="30"/>
    </location>
</feature>
<feature type="short sequence motif" description="Q motif">
    <location>
        <begin position="46"/>
        <end position="74"/>
    </location>
</feature>
<feature type="short sequence motif" description="DECD box">
    <location>
        <begin position="197"/>
        <end position="200"/>
    </location>
</feature>
<feature type="compositionally biased region" description="Acidic residues" evidence="3">
    <location>
        <begin position="9"/>
        <end position="23"/>
    </location>
</feature>
<feature type="binding site" evidence="1">
    <location>
        <begin position="90"/>
        <end position="97"/>
    </location>
    <ligand>
        <name>ATP</name>
        <dbReference type="ChEBI" id="CHEBI:30616"/>
    </ligand>
</feature>
<name>RH56_ARATH</name>
<dbReference type="EC" id="3.6.4.13"/>
<dbReference type="EMBL" id="AL360314">
    <property type="protein sequence ID" value="CAB96655.1"/>
    <property type="status" value="ALT_SEQ"/>
    <property type="molecule type" value="Genomic_DNA"/>
</dbReference>
<dbReference type="EMBL" id="CP002688">
    <property type="protein sequence ID" value="AED91645.1"/>
    <property type="molecule type" value="Genomic_DNA"/>
</dbReference>
<dbReference type="EMBL" id="AF378868">
    <property type="protein sequence ID" value="AAK55671.1"/>
    <property type="molecule type" value="mRNA"/>
</dbReference>
<dbReference type="EMBL" id="AY059168">
    <property type="protein sequence ID" value="AAL15393.1"/>
    <property type="molecule type" value="mRNA"/>
</dbReference>
<dbReference type="RefSeq" id="NP_568244.2">
    <molecule id="Q9LFN6-1"/>
    <property type="nucleotide sequence ID" value="NM_121155.4"/>
</dbReference>
<dbReference type="RefSeq" id="NP_568245.1">
    <molecule id="Q9LFN6-1"/>
    <property type="nucleotide sequence ID" value="NM_121158.4"/>
</dbReference>
<dbReference type="SMR" id="Q9LFN6"/>
<dbReference type="BioGRID" id="16264">
    <property type="interactions" value="12"/>
</dbReference>
<dbReference type="BioGRID" id="16268">
    <property type="interactions" value="12"/>
</dbReference>
<dbReference type="FunCoup" id="Q9LFN6">
    <property type="interactions" value="3862"/>
</dbReference>
<dbReference type="STRING" id="3702.Q9LFN6"/>
<dbReference type="EnsemblPlants" id="AT5G11170.1">
    <property type="protein sequence ID" value="AT5G11170.1"/>
    <property type="gene ID" value="AT5G11170"/>
</dbReference>
<dbReference type="EnsemblPlants" id="AT5G11200.1">
    <property type="protein sequence ID" value="AT5G11200.1"/>
    <property type="gene ID" value="AT5G11200"/>
</dbReference>
<dbReference type="GeneID" id="830990"/>
<dbReference type="Gramene" id="AT5G11170.1">
    <property type="protein sequence ID" value="AT5G11170.1"/>
    <property type="gene ID" value="AT5G11170"/>
</dbReference>
<dbReference type="Gramene" id="AT5G11200.1">
    <property type="protein sequence ID" value="AT5G11200.1"/>
    <property type="gene ID" value="AT5G11200"/>
</dbReference>
<dbReference type="KEGG" id="ath:AT5G11170"/>
<dbReference type="KEGG" id="ath:AT5G11200"/>
<dbReference type="Araport" id="AT5G11200"/>
<dbReference type="TAIR" id="AT5G11200">
    <property type="gene designation" value="UAP56B"/>
</dbReference>
<dbReference type="HOGENOM" id="CLU_003041_1_0_1"/>
<dbReference type="InParanoid" id="Q9LFN6"/>
<dbReference type="OMA" id="SWHILED"/>
<dbReference type="OrthoDB" id="1625029at2759"/>
<dbReference type="PhylomeDB" id="Q9LFN6"/>
<dbReference type="CD-CODE" id="4299E36E">
    <property type="entry name" value="Nucleolus"/>
</dbReference>
<dbReference type="PRO" id="PR:Q9LFN6"/>
<dbReference type="Proteomes" id="UP000006548">
    <property type="component" value="Chromosome 5"/>
</dbReference>
<dbReference type="ExpressionAtlas" id="Q9LFN6">
    <property type="expression patterns" value="baseline and differential"/>
</dbReference>
<dbReference type="GO" id="GO:0005634">
    <property type="term" value="C:nucleus"/>
    <property type="evidence" value="ECO:0007669"/>
    <property type="project" value="UniProtKB-SubCell"/>
</dbReference>
<dbReference type="GO" id="GO:0005524">
    <property type="term" value="F:ATP binding"/>
    <property type="evidence" value="ECO:0007669"/>
    <property type="project" value="UniProtKB-KW"/>
</dbReference>
<dbReference type="GO" id="GO:0016887">
    <property type="term" value="F:ATP hydrolysis activity"/>
    <property type="evidence" value="ECO:0007669"/>
    <property type="project" value="RHEA"/>
</dbReference>
<dbReference type="GO" id="GO:0003723">
    <property type="term" value="F:RNA binding"/>
    <property type="evidence" value="ECO:0007669"/>
    <property type="project" value="UniProtKB-KW"/>
</dbReference>
<dbReference type="GO" id="GO:0003724">
    <property type="term" value="F:RNA helicase activity"/>
    <property type="evidence" value="ECO:0007669"/>
    <property type="project" value="UniProtKB-EC"/>
</dbReference>
<dbReference type="GO" id="GO:0006397">
    <property type="term" value="P:mRNA processing"/>
    <property type="evidence" value="ECO:0007669"/>
    <property type="project" value="UniProtKB-KW"/>
</dbReference>
<dbReference type="GO" id="GO:0051028">
    <property type="term" value="P:mRNA transport"/>
    <property type="evidence" value="ECO:0007669"/>
    <property type="project" value="UniProtKB-KW"/>
</dbReference>
<dbReference type="GO" id="GO:0008380">
    <property type="term" value="P:RNA splicing"/>
    <property type="evidence" value="ECO:0007669"/>
    <property type="project" value="UniProtKB-KW"/>
</dbReference>
<dbReference type="CDD" id="cd17950">
    <property type="entry name" value="DEADc_DDX39"/>
    <property type="match status" value="1"/>
</dbReference>
<dbReference type="CDD" id="cd18787">
    <property type="entry name" value="SF2_C_DEAD"/>
    <property type="match status" value="1"/>
</dbReference>
<dbReference type="FunFam" id="3.40.50.300:FF:000111">
    <property type="entry name" value="DEAD-box ATP-dependent RNA helicase"/>
    <property type="match status" value="1"/>
</dbReference>
<dbReference type="FunFam" id="3.40.50.300:FF:000168">
    <property type="entry name" value="DEAD-box ATP-dependent RNA helicase 56-like"/>
    <property type="match status" value="1"/>
</dbReference>
<dbReference type="Gene3D" id="3.40.50.300">
    <property type="entry name" value="P-loop containing nucleotide triphosphate hydrolases"/>
    <property type="match status" value="2"/>
</dbReference>
<dbReference type="InterPro" id="IPR011545">
    <property type="entry name" value="DEAD/DEAH_box_helicase_dom"/>
</dbReference>
<dbReference type="InterPro" id="IPR014001">
    <property type="entry name" value="Helicase_ATP-bd"/>
</dbReference>
<dbReference type="InterPro" id="IPR001650">
    <property type="entry name" value="Helicase_C-like"/>
</dbReference>
<dbReference type="InterPro" id="IPR027417">
    <property type="entry name" value="P-loop_NTPase"/>
</dbReference>
<dbReference type="InterPro" id="IPR014014">
    <property type="entry name" value="RNA_helicase_DEAD_Q_motif"/>
</dbReference>
<dbReference type="PANTHER" id="PTHR47958">
    <property type="entry name" value="ATP-DEPENDENT RNA HELICASE DBP3"/>
    <property type="match status" value="1"/>
</dbReference>
<dbReference type="Pfam" id="PF00270">
    <property type="entry name" value="DEAD"/>
    <property type="match status" value="1"/>
</dbReference>
<dbReference type="Pfam" id="PF00271">
    <property type="entry name" value="Helicase_C"/>
    <property type="match status" value="1"/>
</dbReference>
<dbReference type="SMART" id="SM00487">
    <property type="entry name" value="DEXDc"/>
    <property type="match status" value="1"/>
</dbReference>
<dbReference type="SMART" id="SM00490">
    <property type="entry name" value="HELICc"/>
    <property type="match status" value="1"/>
</dbReference>
<dbReference type="SUPFAM" id="SSF52540">
    <property type="entry name" value="P-loop containing nucleoside triphosphate hydrolases"/>
    <property type="match status" value="1"/>
</dbReference>
<dbReference type="PROSITE" id="PS51192">
    <property type="entry name" value="HELICASE_ATP_BIND_1"/>
    <property type="match status" value="1"/>
</dbReference>
<dbReference type="PROSITE" id="PS51194">
    <property type="entry name" value="HELICASE_CTER"/>
    <property type="match status" value="1"/>
</dbReference>
<dbReference type="PROSITE" id="PS51195">
    <property type="entry name" value="Q_MOTIF"/>
    <property type="match status" value="1"/>
</dbReference>